<accession>Q40902</accession>
<comment type="function">
    <text evidence="4 5 6 7">Dual-specificity kinase with both serine/threonine and tyrosine kinase activities (PubMed:8038606). Required for postmeiotic development of microspores (Ref.2). Involved in embryo sac development at the late stages of megagametogenesis (Ref.3). Involved in the phosphorylation of KIP1 (PubMed:11500547).</text>
</comment>
<comment type="catalytic activity">
    <reaction evidence="10">
        <text>L-seryl-[protein] + ATP = O-phospho-L-seryl-[protein] + ADP + H(+)</text>
        <dbReference type="Rhea" id="RHEA:17989"/>
        <dbReference type="Rhea" id="RHEA-COMP:9863"/>
        <dbReference type="Rhea" id="RHEA-COMP:11604"/>
        <dbReference type="ChEBI" id="CHEBI:15378"/>
        <dbReference type="ChEBI" id="CHEBI:29999"/>
        <dbReference type="ChEBI" id="CHEBI:30616"/>
        <dbReference type="ChEBI" id="CHEBI:83421"/>
        <dbReference type="ChEBI" id="CHEBI:456216"/>
        <dbReference type="EC" id="2.7.11.1"/>
    </reaction>
</comment>
<comment type="catalytic activity">
    <reaction evidence="10">
        <text>L-threonyl-[protein] + ATP = O-phospho-L-threonyl-[protein] + ADP + H(+)</text>
        <dbReference type="Rhea" id="RHEA:46608"/>
        <dbReference type="Rhea" id="RHEA-COMP:11060"/>
        <dbReference type="Rhea" id="RHEA-COMP:11605"/>
        <dbReference type="ChEBI" id="CHEBI:15378"/>
        <dbReference type="ChEBI" id="CHEBI:30013"/>
        <dbReference type="ChEBI" id="CHEBI:30616"/>
        <dbReference type="ChEBI" id="CHEBI:61977"/>
        <dbReference type="ChEBI" id="CHEBI:456216"/>
        <dbReference type="EC" id="2.7.11.1"/>
    </reaction>
</comment>
<comment type="catalytic activity">
    <reaction evidence="10">
        <text>L-tyrosyl-[protein] + ATP = O-phospho-L-tyrosyl-[protein] + ADP + H(+)</text>
        <dbReference type="Rhea" id="RHEA:10596"/>
        <dbReference type="Rhea" id="RHEA-COMP:10136"/>
        <dbReference type="Rhea" id="RHEA-COMP:20101"/>
        <dbReference type="ChEBI" id="CHEBI:15378"/>
        <dbReference type="ChEBI" id="CHEBI:30616"/>
        <dbReference type="ChEBI" id="CHEBI:46858"/>
        <dbReference type="ChEBI" id="CHEBI:61978"/>
        <dbReference type="ChEBI" id="CHEBI:456216"/>
        <dbReference type="EC" id="2.7.10.1"/>
    </reaction>
</comment>
<comment type="subunit">
    <text evidence="4">Interacts with KIP1.</text>
</comment>
<comment type="subcellular location">
    <subcellularLocation>
        <location evidence="5">Microsome membrane</location>
        <topology evidence="1">Single-pass membrane protein</topology>
    </subcellularLocation>
    <subcellularLocation>
        <location evidence="4">Cytoplasm</location>
    </subcellularLocation>
</comment>
<comment type="tissue specificity">
    <text evidence="4 5 7">Expressed in mature pollen grains and pollen tubes, but not in style, petal, leaf, root or sepal (PubMed:11500547, PubMed:8038606). Very low expression in the ovary (Ref.3).</text>
</comment>
<comment type="developmental stage">
    <text evidence="4 5">Detected around the time of microspore mitosis with a peak in mature pollen grains.</text>
</comment>
<comment type="PTM">
    <text evidence="4 5">Autophosphorylated.</text>
</comment>
<comment type="similarity">
    <text evidence="9">Belongs to the protein kinase superfamily.</text>
</comment>
<feature type="chain" id="PRO_5000142439" description="Pollen receptor-like kinase 1">
    <location>
        <begin position="1"/>
        <end position="720"/>
    </location>
</feature>
<feature type="transmembrane region" description="Helical" evidence="1">
    <location>
        <begin position="330"/>
        <end position="350"/>
    </location>
</feature>
<feature type="repeat" description="LRR 1; degenerate" evidence="10">
    <location>
        <begin position="40"/>
        <end position="64"/>
    </location>
</feature>
<feature type="repeat" description="LRR 2; degenerate" evidence="10">
    <location>
        <begin position="123"/>
        <end position="146"/>
    </location>
</feature>
<feature type="repeat" description="LRR 3" evidence="1">
    <location>
        <begin position="154"/>
        <end position="179"/>
    </location>
</feature>
<feature type="repeat" description="LRR 4" evidence="1">
    <location>
        <begin position="226"/>
        <end position="248"/>
    </location>
</feature>
<feature type="repeat" description="LRR 5" evidence="1">
    <location>
        <begin position="249"/>
        <end position="273"/>
    </location>
</feature>
<feature type="domain" description="Protein kinase" evidence="2">
    <location>
        <begin position="434"/>
        <end position="702"/>
    </location>
</feature>
<feature type="region of interest" description="Disordered" evidence="3">
    <location>
        <begin position="288"/>
        <end position="319"/>
    </location>
</feature>
<feature type="region of interest" description="Disordered" evidence="3">
    <location>
        <begin position="356"/>
        <end position="409"/>
    </location>
</feature>
<feature type="compositionally biased region" description="Polar residues" evidence="3">
    <location>
        <begin position="291"/>
        <end position="317"/>
    </location>
</feature>
<feature type="compositionally biased region" description="Polar residues" evidence="3">
    <location>
        <begin position="356"/>
        <end position="382"/>
    </location>
</feature>
<feature type="compositionally biased region" description="Polar residues" evidence="3">
    <location>
        <begin position="389"/>
        <end position="405"/>
    </location>
</feature>
<feature type="binding site" evidence="2">
    <location>
        <begin position="440"/>
        <end position="448"/>
    </location>
    <ligand>
        <name>ATP</name>
        <dbReference type="ChEBI" id="CHEBI:30616"/>
    </ligand>
</feature>
<feature type="binding site" evidence="2">
    <location>
        <position position="462"/>
    </location>
    <ligand>
        <name>ATP</name>
        <dbReference type="ChEBI" id="CHEBI:30616"/>
    </ligand>
</feature>
<feature type="mutagenesis site" description="Reduced autophosphorylation and strongly decreased interaction with KIP1." evidence="4">
    <original>K</original>
    <variation>R</variation>
    <location>
        <position position="462"/>
    </location>
</feature>
<sequence>MMTEVHDAGRPRVVIFNGSQLQREAIIPFASRSSCFHHQLCSRGHLLIIFLLLVSPFNDAAVDVDGDDNDNLIIDHVPDAKSSSEALLNFKSSLSTSSPRGHEVLGSWIPSNSPCSGNNGNWLGVLCYEGDVWGLQLENLDLSGVIDIDSLLPLHFLRTLSFMNNSFKGQCLIGISLEPSSHCTCPIIASPVRSRMMLPGYDLSQEALFGKQPIQRQHPHLPGYLLPQVFELSLENNRFTGSIPHFPPNVLKVLNLSNNQLEGPIPPALSLMDPTTFSGNKGLCGKPLESACNSPSQEANNPDSRNSSTISGQSSTDVIRKSPTRLSKVMLIVAVCLVVLCLLIVLILIIRRRSHSSSQNPQPVESNYSNNDRDQNAFTSSAPDDHVTLSGNSTYSNNQHSNSNKAEAPTAAVVGKLSFVRDDRPRFDLQDLLRASAEVLGSGNLGSSYKALLMDGQAVVVKRFKQMNHVAKEDFHEHMRRLGRLTHPNLLPLVAYYYRKEEKLLVYDYASNGSLASHLHGNQSRLDWSSRLKIVKGVAKALAYLHNELPSLALPHGHLKSSNVLLDKYLNPVLMDYTLVPLVNLAQVQHLLVAYKAPEYAQQGRITRKTDVWSLGILILETLTGKFPTNYLALSTGYGTELATWVDTIIRDNESAFDKEMNTTKDSQGQIRKLFDIGVACCQEDLDTRWDLKEVVQSIQSLNDKDHGHSNSDQMHDAGV</sequence>
<dbReference type="EC" id="2.7.10.1" evidence="10"/>
<dbReference type="EC" id="2.7.11.1" evidence="10"/>
<dbReference type="EMBL" id="L27341">
    <property type="protein sequence ID" value="AAA33715.1"/>
    <property type="molecule type" value="Genomic_DNA"/>
</dbReference>
<dbReference type="SMR" id="Q40902"/>
<dbReference type="GO" id="GO:0005783">
    <property type="term" value="C:endoplasmic reticulum"/>
    <property type="evidence" value="ECO:0007669"/>
    <property type="project" value="UniProtKB-KW"/>
</dbReference>
<dbReference type="GO" id="GO:0043231">
    <property type="term" value="C:intracellular membrane-bounded organelle"/>
    <property type="evidence" value="ECO:0000314"/>
    <property type="project" value="UniProtKB"/>
</dbReference>
<dbReference type="GO" id="GO:0016020">
    <property type="term" value="C:membrane"/>
    <property type="evidence" value="ECO:0000314"/>
    <property type="project" value="UniProtKB"/>
</dbReference>
<dbReference type="GO" id="GO:0090406">
    <property type="term" value="C:pollen tube"/>
    <property type="evidence" value="ECO:0000314"/>
    <property type="project" value="UniProtKB"/>
</dbReference>
<dbReference type="GO" id="GO:0005524">
    <property type="term" value="F:ATP binding"/>
    <property type="evidence" value="ECO:0007669"/>
    <property type="project" value="UniProtKB-KW"/>
</dbReference>
<dbReference type="GO" id="GO:0004672">
    <property type="term" value="F:protein kinase activity"/>
    <property type="evidence" value="ECO:0000314"/>
    <property type="project" value="UniProtKB"/>
</dbReference>
<dbReference type="GO" id="GO:0106310">
    <property type="term" value="F:protein serine kinase activity"/>
    <property type="evidence" value="ECO:0007669"/>
    <property type="project" value="RHEA"/>
</dbReference>
<dbReference type="GO" id="GO:0004674">
    <property type="term" value="F:protein serine/threonine kinase activity"/>
    <property type="evidence" value="ECO:0007669"/>
    <property type="project" value="UniProtKB-EC"/>
</dbReference>
<dbReference type="GO" id="GO:0004714">
    <property type="term" value="F:transmembrane receptor protein tyrosine kinase activity"/>
    <property type="evidence" value="ECO:0007669"/>
    <property type="project" value="UniProtKB-EC"/>
</dbReference>
<dbReference type="GO" id="GO:0010152">
    <property type="term" value="P:pollen maturation"/>
    <property type="evidence" value="ECO:0000314"/>
    <property type="project" value="UniProtKB"/>
</dbReference>
<dbReference type="GO" id="GO:0046777">
    <property type="term" value="P:protein autophosphorylation"/>
    <property type="evidence" value="ECO:0000314"/>
    <property type="project" value="UniProtKB"/>
</dbReference>
<dbReference type="FunFam" id="3.30.200.20:FF:000307">
    <property type="entry name" value="pollen receptor-like kinase 1"/>
    <property type="match status" value="1"/>
</dbReference>
<dbReference type="Gene3D" id="3.30.200.20">
    <property type="entry name" value="Phosphorylase Kinase, domain 1"/>
    <property type="match status" value="1"/>
</dbReference>
<dbReference type="Gene3D" id="3.80.10.10">
    <property type="entry name" value="Ribonuclease Inhibitor"/>
    <property type="match status" value="2"/>
</dbReference>
<dbReference type="Gene3D" id="1.10.510.10">
    <property type="entry name" value="Transferase(Phosphotransferase) domain 1"/>
    <property type="match status" value="1"/>
</dbReference>
<dbReference type="InterPro" id="IPR011009">
    <property type="entry name" value="Kinase-like_dom_sf"/>
</dbReference>
<dbReference type="InterPro" id="IPR001611">
    <property type="entry name" value="Leu-rich_rpt"/>
</dbReference>
<dbReference type="InterPro" id="IPR032675">
    <property type="entry name" value="LRR_dom_sf"/>
</dbReference>
<dbReference type="InterPro" id="IPR013210">
    <property type="entry name" value="LRR_N_plant-typ"/>
</dbReference>
<dbReference type="InterPro" id="IPR046959">
    <property type="entry name" value="PRK1-6/SRF4-like"/>
</dbReference>
<dbReference type="InterPro" id="IPR000719">
    <property type="entry name" value="Prot_kinase_dom"/>
</dbReference>
<dbReference type="InterPro" id="IPR001245">
    <property type="entry name" value="Ser-Thr/Tyr_kinase_cat_dom"/>
</dbReference>
<dbReference type="PANTHER" id="PTHR48007">
    <property type="entry name" value="LEUCINE-RICH REPEAT RECEPTOR-LIKE PROTEIN KINASE PXC1"/>
    <property type="match status" value="1"/>
</dbReference>
<dbReference type="PANTHER" id="PTHR48007:SF64">
    <property type="entry name" value="POLLEN RECEPTOR-LIKE KINASE 1"/>
    <property type="match status" value="1"/>
</dbReference>
<dbReference type="Pfam" id="PF00560">
    <property type="entry name" value="LRR_1"/>
    <property type="match status" value="1"/>
</dbReference>
<dbReference type="Pfam" id="PF08263">
    <property type="entry name" value="LRRNT_2"/>
    <property type="match status" value="1"/>
</dbReference>
<dbReference type="Pfam" id="PF07714">
    <property type="entry name" value="PK_Tyr_Ser-Thr"/>
    <property type="match status" value="1"/>
</dbReference>
<dbReference type="SUPFAM" id="SSF52058">
    <property type="entry name" value="L domain-like"/>
    <property type="match status" value="1"/>
</dbReference>
<dbReference type="SUPFAM" id="SSF56112">
    <property type="entry name" value="Protein kinase-like (PK-like)"/>
    <property type="match status" value="1"/>
</dbReference>
<dbReference type="PROSITE" id="PS50011">
    <property type="entry name" value="PROTEIN_KINASE_DOM"/>
    <property type="match status" value="1"/>
</dbReference>
<gene>
    <name evidence="8" type="primary">PRK1</name>
</gene>
<organism evidence="11">
    <name type="scientific">Petunia integrifolia</name>
    <name type="common">Violet-flowered petunia</name>
    <name type="synonym">Salpiglossis integrifolia</name>
    <dbReference type="NCBI Taxonomy" id="4103"/>
    <lineage>
        <taxon>Eukaryota</taxon>
        <taxon>Viridiplantae</taxon>
        <taxon>Streptophyta</taxon>
        <taxon>Embryophyta</taxon>
        <taxon>Tracheophyta</taxon>
        <taxon>Spermatophyta</taxon>
        <taxon>Magnoliopsida</taxon>
        <taxon>eudicotyledons</taxon>
        <taxon>Gunneridae</taxon>
        <taxon>Pentapetalae</taxon>
        <taxon>asterids</taxon>
        <taxon>lamiids</taxon>
        <taxon>Solanales</taxon>
        <taxon>Solanaceae</taxon>
        <taxon>Petunioideae</taxon>
        <taxon>Petunia</taxon>
    </lineage>
</organism>
<name>PRK1_PETIN</name>
<keyword id="KW-0067">ATP-binding</keyword>
<keyword id="KW-0963">Cytoplasm</keyword>
<keyword id="KW-0256">Endoplasmic reticulum</keyword>
<keyword id="KW-0418">Kinase</keyword>
<keyword id="KW-0433">Leucine-rich repeat</keyword>
<keyword id="KW-0472">Membrane</keyword>
<keyword id="KW-0492">Microsome</keyword>
<keyword id="KW-0547">Nucleotide-binding</keyword>
<keyword id="KW-0597">Phosphoprotein</keyword>
<keyword id="KW-0675">Receptor</keyword>
<keyword id="KW-0677">Repeat</keyword>
<keyword id="KW-0808">Transferase</keyword>
<keyword id="KW-0812">Transmembrane</keyword>
<keyword id="KW-1133">Transmembrane helix</keyword>
<protein>
    <recommendedName>
        <fullName evidence="8">Pollen receptor-like kinase 1</fullName>
        <ecNumber evidence="10">2.7.10.1</ecNumber>
        <ecNumber evidence="10">2.7.11.1</ecNumber>
    </recommendedName>
</protein>
<reference key="1">
    <citation type="journal article" date="1994" name="Plant Cell">
        <title>Characterization of a pollen-expressed receptor-like kinase gene of Petunia inflata and the activity of its encoded kinase.</title>
        <authorList>
            <person name="Mu J.H."/>
            <person name="Lee H.S."/>
            <person name="Kao T.H."/>
        </authorList>
    </citation>
    <scope>NUCLEOTIDE SEQUENCE [GENOMIC DNA]</scope>
    <scope>FUNCTION</scope>
    <scope>TISSUE SPECIFICITY</scope>
    <scope>DEVELOPMENTAL STAGE</scope>
    <scope>AUTOPHOSPHORYLATION</scope>
    <scope>SUBCELLULAR LOCATION</scope>
    <source>
        <tissue>Pollen</tissue>
    </source>
</reference>
<reference key="2">
    <citation type="journal article" date="1996" name="Plant J.">
        <title>PRK1, a receptor-like kinase of Petunia inflata, is essential for postmeiotic development of pollen.</title>
        <authorList>
            <person name="Lee H.-S."/>
            <person name="Karunanandaa B."/>
            <person name="McCubbin A."/>
            <person name="Gilroy S."/>
            <person name="Kao T.-H."/>
        </authorList>
    </citation>
    <scope>FUNCTION</scope>
</reference>
<reference key="3">
    <citation type="journal article" date="1997" name="Sex. Plant Reprod.">
        <title>Embryo sac development is affected in Petunia inflata plants transformed with an antisense gene encoding the extracellular domain of receptor kinase PRK1.</title>
        <authorList>
            <person name="Lee H.-S."/>
            <person name="Chung Y.-Y."/>
            <person name="Das C."/>
            <person name="Karunanandaa B."/>
            <person name="van Went J.L."/>
            <person name="Mariani C."/>
            <person name="Kao T.-H."/>
        </authorList>
    </citation>
    <scope>FUNCTION</scope>
    <scope>TISSUE SPECIFICITY</scope>
</reference>
<reference key="4">
    <citation type="journal article" date="2001" name="Plant Physiol.">
        <title>Isolation and characterization of kinase interacting protein 1, a pollen protein that interacts with the kinase domain of PRK1, a receptor-like kinase of petunia.</title>
        <authorList>
            <person name="Skirpan A.L."/>
            <person name="McCubbin A.G."/>
            <person name="Ishimizu T."/>
            <person name="Wang X."/>
            <person name="Hu Y."/>
            <person name="Dowd P.E."/>
            <person name="Ma H."/>
            <person name="Kao T."/>
        </authorList>
    </citation>
    <scope>FUNCTION</scope>
    <scope>INTERACTION WITH KIP1</scope>
    <scope>MUTAGENESIS OF LYS-462</scope>
    <scope>TISSUE SPECIFICITY</scope>
    <scope>DEVELOPMENTAL STAGE</scope>
    <scope>AUTOPHOSPHORYLATION</scope>
    <scope>SUBCELLULAR LOCATION</scope>
</reference>
<evidence type="ECO:0000255" key="1"/>
<evidence type="ECO:0000255" key="2">
    <source>
        <dbReference type="PROSITE-ProRule" id="PRU00159"/>
    </source>
</evidence>
<evidence type="ECO:0000256" key="3">
    <source>
        <dbReference type="SAM" id="MobiDB-lite"/>
    </source>
</evidence>
<evidence type="ECO:0000269" key="4">
    <source>
    </source>
</evidence>
<evidence type="ECO:0000269" key="5">
    <source>
    </source>
</evidence>
<evidence type="ECO:0000269" key="6">
    <source ref="2"/>
</evidence>
<evidence type="ECO:0000269" key="7">
    <source ref="3"/>
</evidence>
<evidence type="ECO:0000303" key="8">
    <source>
    </source>
</evidence>
<evidence type="ECO:0000305" key="9"/>
<evidence type="ECO:0000305" key="10">
    <source>
    </source>
</evidence>
<evidence type="ECO:0000312" key="11">
    <source>
        <dbReference type="EMBL" id="AAA33715.1"/>
    </source>
</evidence>
<proteinExistence type="evidence at protein level"/>